<accession>A8H7A8</accession>
<dbReference type="EC" id="2.7.1.148" evidence="1"/>
<dbReference type="EMBL" id="CP000851">
    <property type="protein sequence ID" value="ABV88445.1"/>
    <property type="molecule type" value="Genomic_DNA"/>
</dbReference>
<dbReference type="RefSeq" id="WP_012156347.1">
    <property type="nucleotide sequence ID" value="NC_009901.1"/>
</dbReference>
<dbReference type="SMR" id="A8H7A8"/>
<dbReference type="STRING" id="398579.Spea_3129"/>
<dbReference type="KEGG" id="spl:Spea_3129"/>
<dbReference type="eggNOG" id="COG1947">
    <property type="taxonomic scope" value="Bacteria"/>
</dbReference>
<dbReference type="HOGENOM" id="CLU_053057_3_0_6"/>
<dbReference type="OrthoDB" id="9809438at2"/>
<dbReference type="UniPathway" id="UPA00056">
    <property type="reaction ID" value="UER00094"/>
</dbReference>
<dbReference type="Proteomes" id="UP000002608">
    <property type="component" value="Chromosome"/>
</dbReference>
<dbReference type="GO" id="GO:0050515">
    <property type="term" value="F:4-(cytidine 5'-diphospho)-2-C-methyl-D-erythritol kinase activity"/>
    <property type="evidence" value="ECO:0007669"/>
    <property type="project" value="UniProtKB-UniRule"/>
</dbReference>
<dbReference type="GO" id="GO:0005524">
    <property type="term" value="F:ATP binding"/>
    <property type="evidence" value="ECO:0007669"/>
    <property type="project" value="UniProtKB-UniRule"/>
</dbReference>
<dbReference type="GO" id="GO:0019288">
    <property type="term" value="P:isopentenyl diphosphate biosynthetic process, methylerythritol 4-phosphate pathway"/>
    <property type="evidence" value="ECO:0007669"/>
    <property type="project" value="UniProtKB-UniRule"/>
</dbReference>
<dbReference type="GO" id="GO:0016114">
    <property type="term" value="P:terpenoid biosynthetic process"/>
    <property type="evidence" value="ECO:0007669"/>
    <property type="project" value="InterPro"/>
</dbReference>
<dbReference type="Gene3D" id="3.30.230.10">
    <property type="match status" value="1"/>
</dbReference>
<dbReference type="Gene3D" id="3.30.70.890">
    <property type="entry name" value="GHMP kinase, C-terminal domain"/>
    <property type="match status" value="1"/>
</dbReference>
<dbReference type="HAMAP" id="MF_00061">
    <property type="entry name" value="IspE"/>
    <property type="match status" value="1"/>
</dbReference>
<dbReference type="InterPro" id="IPR013750">
    <property type="entry name" value="GHMP_kinase_C_dom"/>
</dbReference>
<dbReference type="InterPro" id="IPR036554">
    <property type="entry name" value="GHMP_kinase_C_sf"/>
</dbReference>
<dbReference type="InterPro" id="IPR006204">
    <property type="entry name" value="GHMP_kinase_N_dom"/>
</dbReference>
<dbReference type="InterPro" id="IPR004424">
    <property type="entry name" value="IspE"/>
</dbReference>
<dbReference type="InterPro" id="IPR020568">
    <property type="entry name" value="Ribosomal_Su5_D2-typ_SF"/>
</dbReference>
<dbReference type="InterPro" id="IPR014721">
    <property type="entry name" value="Ribsml_uS5_D2-typ_fold_subgr"/>
</dbReference>
<dbReference type="NCBIfam" id="TIGR00154">
    <property type="entry name" value="ispE"/>
    <property type="match status" value="1"/>
</dbReference>
<dbReference type="PANTHER" id="PTHR43527">
    <property type="entry name" value="4-DIPHOSPHOCYTIDYL-2-C-METHYL-D-ERYTHRITOL KINASE, CHLOROPLASTIC"/>
    <property type="match status" value="1"/>
</dbReference>
<dbReference type="PANTHER" id="PTHR43527:SF2">
    <property type="entry name" value="4-DIPHOSPHOCYTIDYL-2-C-METHYL-D-ERYTHRITOL KINASE, CHLOROPLASTIC"/>
    <property type="match status" value="1"/>
</dbReference>
<dbReference type="Pfam" id="PF08544">
    <property type="entry name" value="GHMP_kinases_C"/>
    <property type="match status" value="1"/>
</dbReference>
<dbReference type="Pfam" id="PF00288">
    <property type="entry name" value="GHMP_kinases_N"/>
    <property type="match status" value="1"/>
</dbReference>
<dbReference type="PIRSF" id="PIRSF010376">
    <property type="entry name" value="IspE"/>
    <property type="match status" value="1"/>
</dbReference>
<dbReference type="SUPFAM" id="SSF55060">
    <property type="entry name" value="GHMP Kinase, C-terminal domain"/>
    <property type="match status" value="1"/>
</dbReference>
<dbReference type="SUPFAM" id="SSF54211">
    <property type="entry name" value="Ribosomal protein S5 domain 2-like"/>
    <property type="match status" value="1"/>
</dbReference>
<proteinExistence type="inferred from homology"/>
<keyword id="KW-0067">ATP-binding</keyword>
<keyword id="KW-0414">Isoprene biosynthesis</keyword>
<keyword id="KW-0418">Kinase</keyword>
<keyword id="KW-0547">Nucleotide-binding</keyword>
<keyword id="KW-1185">Reference proteome</keyword>
<keyword id="KW-0808">Transferase</keyword>
<comment type="function">
    <text evidence="1">Catalyzes the phosphorylation of the position 2 hydroxy group of 4-diphosphocytidyl-2C-methyl-D-erythritol.</text>
</comment>
<comment type="catalytic activity">
    <reaction evidence="1">
        <text>4-CDP-2-C-methyl-D-erythritol + ATP = 4-CDP-2-C-methyl-D-erythritol 2-phosphate + ADP + H(+)</text>
        <dbReference type="Rhea" id="RHEA:18437"/>
        <dbReference type="ChEBI" id="CHEBI:15378"/>
        <dbReference type="ChEBI" id="CHEBI:30616"/>
        <dbReference type="ChEBI" id="CHEBI:57823"/>
        <dbReference type="ChEBI" id="CHEBI:57919"/>
        <dbReference type="ChEBI" id="CHEBI:456216"/>
        <dbReference type="EC" id="2.7.1.148"/>
    </reaction>
</comment>
<comment type="pathway">
    <text evidence="1">Isoprenoid biosynthesis; isopentenyl diphosphate biosynthesis via DXP pathway; isopentenyl diphosphate from 1-deoxy-D-xylulose 5-phosphate: step 3/6.</text>
</comment>
<comment type="similarity">
    <text evidence="1">Belongs to the GHMP kinase family. IspE subfamily.</text>
</comment>
<gene>
    <name evidence="1" type="primary">ispE</name>
    <name type="ordered locus">Spea_3129</name>
</gene>
<protein>
    <recommendedName>
        <fullName evidence="1">4-diphosphocytidyl-2-C-methyl-D-erythritol kinase</fullName>
        <shortName evidence="1">CMK</shortName>
        <ecNumber evidence="1">2.7.1.148</ecNumber>
    </recommendedName>
    <alternativeName>
        <fullName evidence="1">4-(cytidine-5'-diphospho)-2-C-methyl-D-erythritol kinase</fullName>
    </alternativeName>
</protein>
<evidence type="ECO:0000255" key="1">
    <source>
        <dbReference type="HAMAP-Rule" id="MF_00061"/>
    </source>
</evidence>
<organism>
    <name type="scientific">Shewanella pealeana (strain ATCC 700345 / ANG-SQ1)</name>
    <dbReference type="NCBI Taxonomy" id="398579"/>
    <lineage>
        <taxon>Bacteria</taxon>
        <taxon>Pseudomonadati</taxon>
        <taxon>Pseudomonadota</taxon>
        <taxon>Gammaproteobacteria</taxon>
        <taxon>Alteromonadales</taxon>
        <taxon>Shewanellaceae</taxon>
        <taxon>Shewanella</taxon>
    </lineage>
</organism>
<sequence length="284" mass="31076">MTASLSLGWPAPAKLNLFLHINAQRHDGYHELQTLFQFIEHCDYLDFKVLDTPKLKLHSNMSSAVADSDNLILKAAKSLQQRTDCQLGAEIWLDKRLPMGGGLGGGSSDAATTLVALNQLWETGLSLRELGEIGLKLGADVPVFINGFSAFAEGVGEKLQNVEPAEPWYLVLTPQVHVSTAEVFQDPDLPRNTPKLSLESLMNSPWQNDCQTLVAKRYPQVAKTLAWLLEYAPSRMTGTGACVFGQFEQEQEAKDVLAKLPASIQGFVAKGANISPLMLRLAQC</sequence>
<feature type="chain" id="PRO_1000075060" description="4-diphosphocytidyl-2-C-methyl-D-erythritol kinase">
    <location>
        <begin position="1"/>
        <end position="284"/>
    </location>
</feature>
<feature type="active site" evidence="1">
    <location>
        <position position="14"/>
    </location>
</feature>
<feature type="active site" evidence="1">
    <location>
        <position position="140"/>
    </location>
</feature>
<feature type="binding site" evidence="1">
    <location>
        <begin position="98"/>
        <end position="108"/>
    </location>
    <ligand>
        <name>ATP</name>
        <dbReference type="ChEBI" id="CHEBI:30616"/>
    </ligand>
</feature>
<reference key="1">
    <citation type="submission" date="2007-10" db="EMBL/GenBank/DDBJ databases">
        <title>Complete sequence of Shewanella pealeana ATCC 700345.</title>
        <authorList>
            <consortium name="US DOE Joint Genome Institute"/>
            <person name="Copeland A."/>
            <person name="Lucas S."/>
            <person name="Lapidus A."/>
            <person name="Barry K."/>
            <person name="Glavina del Rio T."/>
            <person name="Dalin E."/>
            <person name="Tice H."/>
            <person name="Pitluck S."/>
            <person name="Chertkov O."/>
            <person name="Brettin T."/>
            <person name="Bruce D."/>
            <person name="Detter J.C."/>
            <person name="Han C."/>
            <person name="Schmutz J."/>
            <person name="Larimer F."/>
            <person name="Land M."/>
            <person name="Hauser L."/>
            <person name="Kyrpides N."/>
            <person name="Kim E."/>
            <person name="Zhao J.-S.Z."/>
            <person name="Manno D."/>
            <person name="Hawari J."/>
            <person name="Richardson P."/>
        </authorList>
    </citation>
    <scope>NUCLEOTIDE SEQUENCE [LARGE SCALE GENOMIC DNA]</scope>
    <source>
        <strain>ATCC 700345 / ANG-SQ1</strain>
    </source>
</reference>
<name>ISPE_SHEPA</name>